<gene>
    <name evidence="1" type="primary">thrS</name>
    <name type="ordered locus">BAV1393</name>
</gene>
<evidence type="ECO:0000255" key="1">
    <source>
        <dbReference type="HAMAP-Rule" id="MF_00184"/>
    </source>
</evidence>
<evidence type="ECO:0000255" key="2">
    <source>
        <dbReference type="PROSITE-ProRule" id="PRU01228"/>
    </source>
</evidence>
<comment type="function">
    <text evidence="1">Catalyzes the attachment of threonine to tRNA(Thr) in a two-step reaction: L-threonine is first activated by ATP to form Thr-AMP and then transferred to the acceptor end of tRNA(Thr). Also edits incorrectly charged L-seryl-tRNA(Thr).</text>
</comment>
<comment type="catalytic activity">
    <reaction evidence="1">
        <text>tRNA(Thr) + L-threonine + ATP = L-threonyl-tRNA(Thr) + AMP + diphosphate + H(+)</text>
        <dbReference type="Rhea" id="RHEA:24624"/>
        <dbReference type="Rhea" id="RHEA-COMP:9670"/>
        <dbReference type="Rhea" id="RHEA-COMP:9704"/>
        <dbReference type="ChEBI" id="CHEBI:15378"/>
        <dbReference type="ChEBI" id="CHEBI:30616"/>
        <dbReference type="ChEBI" id="CHEBI:33019"/>
        <dbReference type="ChEBI" id="CHEBI:57926"/>
        <dbReference type="ChEBI" id="CHEBI:78442"/>
        <dbReference type="ChEBI" id="CHEBI:78534"/>
        <dbReference type="ChEBI" id="CHEBI:456215"/>
        <dbReference type="EC" id="6.1.1.3"/>
    </reaction>
</comment>
<comment type="cofactor">
    <cofactor evidence="1">
        <name>Zn(2+)</name>
        <dbReference type="ChEBI" id="CHEBI:29105"/>
    </cofactor>
    <text evidence="1">Binds 1 zinc ion per subunit.</text>
</comment>
<comment type="subunit">
    <text evidence="1">Homodimer.</text>
</comment>
<comment type="subcellular location">
    <subcellularLocation>
        <location evidence="1">Cytoplasm</location>
    </subcellularLocation>
</comment>
<comment type="similarity">
    <text evidence="1">Belongs to the class-II aminoacyl-tRNA synthetase family.</text>
</comment>
<reference key="1">
    <citation type="journal article" date="2006" name="J. Bacteriol.">
        <title>Comparison of the genome sequence of the poultry pathogen Bordetella avium with those of B. bronchiseptica, B. pertussis, and B. parapertussis reveals extensive diversity in surface structures associated with host interaction.</title>
        <authorList>
            <person name="Sebaihia M."/>
            <person name="Preston A."/>
            <person name="Maskell D.J."/>
            <person name="Kuzmiak H."/>
            <person name="Connell T.D."/>
            <person name="King N.D."/>
            <person name="Orndorff P.E."/>
            <person name="Miyamoto D.M."/>
            <person name="Thomson N.R."/>
            <person name="Harris D."/>
            <person name="Goble A."/>
            <person name="Lord A."/>
            <person name="Murphy L."/>
            <person name="Quail M.A."/>
            <person name="Rutter S."/>
            <person name="Squares R."/>
            <person name="Squares S."/>
            <person name="Woodward J."/>
            <person name="Parkhill J."/>
            <person name="Temple L.M."/>
        </authorList>
    </citation>
    <scope>NUCLEOTIDE SEQUENCE [LARGE SCALE GENOMIC DNA]</scope>
    <source>
        <strain>197N</strain>
    </source>
</reference>
<dbReference type="EC" id="6.1.1.3" evidence="1"/>
<dbReference type="EMBL" id="AM167904">
    <property type="protein sequence ID" value="CAJ49002.1"/>
    <property type="molecule type" value="Genomic_DNA"/>
</dbReference>
<dbReference type="RefSeq" id="WP_012417074.1">
    <property type="nucleotide sequence ID" value="NC_010645.1"/>
</dbReference>
<dbReference type="SMR" id="Q2L2M5"/>
<dbReference type="STRING" id="360910.BAV1393"/>
<dbReference type="KEGG" id="bav:BAV1393"/>
<dbReference type="eggNOG" id="COG0441">
    <property type="taxonomic scope" value="Bacteria"/>
</dbReference>
<dbReference type="HOGENOM" id="CLU_008554_0_1_4"/>
<dbReference type="OrthoDB" id="9802304at2"/>
<dbReference type="Proteomes" id="UP000001977">
    <property type="component" value="Chromosome"/>
</dbReference>
<dbReference type="GO" id="GO:0005829">
    <property type="term" value="C:cytosol"/>
    <property type="evidence" value="ECO:0007669"/>
    <property type="project" value="TreeGrafter"/>
</dbReference>
<dbReference type="GO" id="GO:0005524">
    <property type="term" value="F:ATP binding"/>
    <property type="evidence" value="ECO:0007669"/>
    <property type="project" value="UniProtKB-UniRule"/>
</dbReference>
<dbReference type="GO" id="GO:0046872">
    <property type="term" value="F:metal ion binding"/>
    <property type="evidence" value="ECO:0007669"/>
    <property type="project" value="UniProtKB-KW"/>
</dbReference>
<dbReference type="GO" id="GO:0004829">
    <property type="term" value="F:threonine-tRNA ligase activity"/>
    <property type="evidence" value="ECO:0007669"/>
    <property type="project" value="UniProtKB-UniRule"/>
</dbReference>
<dbReference type="GO" id="GO:0000049">
    <property type="term" value="F:tRNA binding"/>
    <property type="evidence" value="ECO:0007669"/>
    <property type="project" value="UniProtKB-KW"/>
</dbReference>
<dbReference type="GO" id="GO:0006435">
    <property type="term" value="P:threonyl-tRNA aminoacylation"/>
    <property type="evidence" value="ECO:0007669"/>
    <property type="project" value="UniProtKB-UniRule"/>
</dbReference>
<dbReference type="CDD" id="cd01667">
    <property type="entry name" value="TGS_ThrRS"/>
    <property type="match status" value="1"/>
</dbReference>
<dbReference type="CDD" id="cd00860">
    <property type="entry name" value="ThrRS_anticodon"/>
    <property type="match status" value="1"/>
</dbReference>
<dbReference type="CDD" id="cd00771">
    <property type="entry name" value="ThrRS_core"/>
    <property type="match status" value="1"/>
</dbReference>
<dbReference type="FunFam" id="3.10.20.30:FF:000005">
    <property type="entry name" value="Threonine--tRNA ligase"/>
    <property type="match status" value="1"/>
</dbReference>
<dbReference type="FunFam" id="3.30.54.20:FF:000002">
    <property type="entry name" value="Threonine--tRNA ligase"/>
    <property type="match status" value="1"/>
</dbReference>
<dbReference type="FunFam" id="3.30.930.10:FF:000002">
    <property type="entry name" value="Threonine--tRNA ligase"/>
    <property type="match status" value="1"/>
</dbReference>
<dbReference type="FunFam" id="3.40.50.800:FF:000001">
    <property type="entry name" value="Threonine--tRNA ligase"/>
    <property type="match status" value="1"/>
</dbReference>
<dbReference type="FunFam" id="3.30.980.10:FF:000005">
    <property type="entry name" value="Threonyl-tRNA synthetase, mitochondrial"/>
    <property type="match status" value="1"/>
</dbReference>
<dbReference type="Gene3D" id="3.10.20.30">
    <property type="match status" value="1"/>
</dbReference>
<dbReference type="Gene3D" id="3.30.54.20">
    <property type="match status" value="1"/>
</dbReference>
<dbReference type="Gene3D" id="3.40.50.800">
    <property type="entry name" value="Anticodon-binding domain"/>
    <property type="match status" value="1"/>
</dbReference>
<dbReference type="Gene3D" id="3.30.930.10">
    <property type="entry name" value="Bira Bifunctional Protein, Domain 2"/>
    <property type="match status" value="1"/>
</dbReference>
<dbReference type="Gene3D" id="3.30.980.10">
    <property type="entry name" value="Threonyl-trna Synthetase, Chain A, domain 2"/>
    <property type="match status" value="1"/>
</dbReference>
<dbReference type="HAMAP" id="MF_00184">
    <property type="entry name" value="Thr_tRNA_synth"/>
    <property type="match status" value="1"/>
</dbReference>
<dbReference type="InterPro" id="IPR002314">
    <property type="entry name" value="aa-tRNA-synt_IIb"/>
</dbReference>
<dbReference type="InterPro" id="IPR006195">
    <property type="entry name" value="aa-tRNA-synth_II"/>
</dbReference>
<dbReference type="InterPro" id="IPR045864">
    <property type="entry name" value="aa-tRNA-synth_II/BPL/LPL"/>
</dbReference>
<dbReference type="InterPro" id="IPR004154">
    <property type="entry name" value="Anticodon-bd"/>
</dbReference>
<dbReference type="InterPro" id="IPR036621">
    <property type="entry name" value="Anticodon-bd_dom_sf"/>
</dbReference>
<dbReference type="InterPro" id="IPR012675">
    <property type="entry name" value="Beta-grasp_dom_sf"/>
</dbReference>
<dbReference type="InterPro" id="IPR004095">
    <property type="entry name" value="TGS"/>
</dbReference>
<dbReference type="InterPro" id="IPR012676">
    <property type="entry name" value="TGS-like"/>
</dbReference>
<dbReference type="InterPro" id="IPR002320">
    <property type="entry name" value="Thr-tRNA-ligase_IIa"/>
</dbReference>
<dbReference type="InterPro" id="IPR018163">
    <property type="entry name" value="Thr/Ala-tRNA-synth_IIc_edit"/>
</dbReference>
<dbReference type="InterPro" id="IPR047246">
    <property type="entry name" value="ThrRS_anticodon"/>
</dbReference>
<dbReference type="InterPro" id="IPR033728">
    <property type="entry name" value="ThrRS_core"/>
</dbReference>
<dbReference type="InterPro" id="IPR012947">
    <property type="entry name" value="tRNA_SAD"/>
</dbReference>
<dbReference type="NCBIfam" id="TIGR00418">
    <property type="entry name" value="thrS"/>
    <property type="match status" value="1"/>
</dbReference>
<dbReference type="PANTHER" id="PTHR11451:SF44">
    <property type="entry name" value="THREONINE--TRNA LIGASE, CHLOROPLASTIC_MITOCHONDRIAL 2"/>
    <property type="match status" value="1"/>
</dbReference>
<dbReference type="PANTHER" id="PTHR11451">
    <property type="entry name" value="THREONINE-TRNA LIGASE"/>
    <property type="match status" value="1"/>
</dbReference>
<dbReference type="Pfam" id="PF03129">
    <property type="entry name" value="HGTP_anticodon"/>
    <property type="match status" value="1"/>
</dbReference>
<dbReference type="Pfam" id="PF02824">
    <property type="entry name" value="TGS"/>
    <property type="match status" value="1"/>
</dbReference>
<dbReference type="Pfam" id="PF00587">
    <property type="entry name" value="tRNA-synt_2b"/>
    <property type="match status" value="1"/>
</dbReference>
<dbReference type="Pfam" id="PF07973">
    <property type="entry name" value="tRNA_SAD"/>
    <property type="match status" value="1"/>
</dbReference>
<dbReference type="PRINTS" id="PR01047">
    <property type="entry name" value="TRNASYNTHTHR"/>
</dbReference>
<dbReference type="SMART" id="SM00863">
    <property type="entry name" value="tRNA_SAD"/>
    <property type="match status" value="1"/>
</dbReference>
<dbReference type="SUPFAM" id="SSF52954">
    <property type="entry name" value="Class II aaRS ABD-related"/>
    <property type="match status" value="1"/>
</dbReference>
<dbReference type="SUPFAM" id="SSF55681">
    <property type="entry name" value="Class II aaRS and biotin synthetases"/>
    <property type="match status" value="1"/>
</dbReference>
<dbReference type="SUPFAM" id="SSF81271">
    <property type="entry name" value="TGS-like"/>
    <property type="match status" value="1"/>
</dbReference>
<dbReference type="SUPFAM" id="SSF55186">
    <property type="entry name" value="ThrRS/AlaRS common domain"/>
    <property type="match status" value="1"/>
</dbReference>
<dbReference type="PROSITE" id="PS50862">
    <property type="entry name" value="AA_TRNA_LIGASE_II"/>
    <property type="match status" value="1"/>
</dbReference>
<dbReference type="PROSITE" id="PS51880">
    <property type="entry name" value="TGS"/>
    <property type="match status" value="1"/>
</dbReference>
<proteinExistence type="inferred from homology"/>
<keyword id="KW-0030">Aminoacyl-tRNA synthetase</keyword>
<keyword id="KW-0067">ATP-binding</keyword>
<keyword id="KW-0963">Cytoplasm</keyword>
<keyword id="KW-0436">Ligase</keyword>
<keyword id="KW-0479">Metal-binding</keyword>
<keyword id="KW-0547">Nucleotide-binding</keyword>
<keyword id="KW-0648">Protein biosynthesis</keyword>
<keyword id="KW-1185">Reference proteome</keyword>
<keyword id="KW-0694">RNA-binding</keyword>
<keyword id="KW-0820">tRNA-binding</keyword>
<keyword id="KW-0862">Zinc</keyword>
<feature type="chain" id="PRO_1000020345" description="Threonine--tRNA ligase">
    <location>
        <begin position="1"/>
        <end position="650"/>
    </location>
</feature>
<feature type="domain" description="TGS" evidence="2">
    <location>
        <begin position="1"/>
        <end position="66"/>
    </location>
</feature>
<feature type="region of interest" description="Catalytic" evidence="1">
    <location>
        <begin position="247"/>
        <end position="538"/>
    </location>
</feature>
<feature type="binding site" evidence="1">
    <location>
        <position position="338"/>
    </location>
    <ligand>
        <name>Zn(2+)</name>
        <dbReference type="ChEBI" id="CHEBI:29105"/>
    </ligand>
</feature>
<feature type="binding site" evidence="1">
    <location>
        <position position="389"/>
    </location>
    <ligand>
        <name>Zn(2+)</name>
        <dbReference type="ChEBI" id="CHEBI:29105"/>
    </ligand>
</feature>
<feature type="binding site" evidence="1">
    <location>
        <position position="515"/>
    </location>
    <ligand>
        <name>Zn(2+)</name>
        <dbReference type="ChEBI" id="CHEBI:29105"/>
    </ligand>
</feature>
<accession>Q2L2M5</accession>
<sequence length="650" mass="73600">MVQITLPDGSQRQYPGPVTVAEVAQSIGTGLAKAALAGRVTVNDAEPKLVDTSFRIDQDAKLAIVTAKDADGLDLIRHSTAHLLAYAVKSLYPDAQVTIGPVIDNGFYYDFSYKRPFTPEDLQAIEKKMAELARKDEVVTREEWTRDDAVAYFKSIGENYKAEIIASIPSNEKISLYREGEFIDLCRGPHVPSTGKLKVFKLMKLAGAYWRGDSNNEMLQRIYGTAWATKDEQDAYLHMLEEAERRDHRKIGRDLDLFHFQDEGPGLIFWHPKGWTLWQQVEQYMRAVYRDNGYQEVKAPQILDLSLWKKTGHWDNYRENMFTTESENRVYGLKPMNCPGHVQIFNAGLHSYRELPLRYGEFGQCHRNEPSGSLHGMMRVRGFTQDDGHIFCTEDQLQDECADFTALLQKVYRDFGFTEVLYKVATRPEKRIGSDEIWDKAETALMESLRRTGCEFEISPGEGAFYGPKIEYTLKDAIGRHWQCGTIQVDFSMPVRLGAEYVDQNDQRRAPVMLHRAILGSLERFIGMLIENHAGAMPPWLAPVQAVVCCISEPSAEYAAKITQSLKKQGFRVQADLRGEKITRKIREHSLQKVPYILVVGDKEAQNGTVAVRGLGGLDLGAIPFDDFVARLNEDVASRRNVVQPDSKAV</sequence>
<organism>
    <name type="scientific">Bordetella avium (strain 197N)</name>
    <dbReference type="NCBI Taxonomy" id="360910"/>
    <lineage>
        <taxon>Bacteria</taxon>
        <taxon>Pseudomonadati</taxon>
        <taxon>Pseudomonadota</taxon>
        <taxon>Betaproteobacteria</taxon>
        <taxon>Burkholderiales</taxon>
        <taxon>Alcaligenaceae</taxon>
        <taxon>Bordetella</taxon>
    </lineage>
</organism>
<name>SYT_BORA1</name>
<protein>
    <recommendedName>
        <fullName evidence="1">Threonine--tRNA ligase</fullName>
        <ecNumber evidence="1">6.1.1.3</ecNumber>
    </recommendedName>
    <alternativeName>
        <fullName evidence="1">Threonyl-tRNA synthetase</fullName>
        <shortName evidence="1">ThrRS</shortName>
    </alternativeName>
</protein>